<protein>
    <recommendedName>
        <fullName evidence="1">ATP synthase epsilon chain, plastid</fullName>
    </recommendedName>
    <alternativeName>
        <fullName evidence="1">ATP synthase F1 sector epsilon subunit</fullName>
    </alternativeName>
    <alternativeName>
        <fullName evidence="1">F-ATPase epsilon subunit</fullName>
    </alternativeName>
</protein>
<evidence type="ECO:0000255" key="1">
    <source>
        <dbReference type="HAMAP-Rule" id="MF_00530"/>
    </source>
</evidence>
<evidence type="ECO:0000305" key="2"/>
<proteinExistence type="inferred from homology"/>
<gene>
    <name evidence="1" type="primary">atpE</name>
</gene>
<organism>
    <name type="scientific">Cuscuta reflexa</name>
    <name type="common">Southern Asian dodder</name>
    <dbReference type="NCBI Taxonomy" id="4129"/>
    <lineage>
        <taxon>Eukaryota</taxon>
        <taxon>Viridiplantae</taxon>
        <taxon>Streptophyta</taxon>
        <taxon>Embryophyta</taxon>
        <taxon>Tracheophyta</taxon>
        <taxon>Spermatophyta</taxon>
        <taxon>Magnoliopsida</taxon>
        <taxon>eudicotyledons</taxon>
        <taxon>Gunneridae</taxon>
        <taxon>Pentapetalae</taxon>
        <taxon>asterids</taxon>
        <taxon>lamiids</taxon>
        <taxon>Solanales</taxon>
        <taxon>Convolvulaceae</taxon>
        <taxon>Cuscuteae</taxon>
        <taxon>Cuscuta</taxon>
        <taxon>Cuscuta subgen. Monogynella</taxon>
    </lineage>
</organism>
<accession>P30400</accession>
<accession>A7M980</accession>
<keyword id="KW-0066">ATP synthesis</keyword>
<keyword id="KW-0139">CF(1)</keyword>
<keyword id="KW-0375">Hydrogen ion transport</keyword>
<keyword id="KW-0406">Ion transport</keyword>
<keyword id="KW-0472">Membrane</keyword>
<keyword id="KW-0934">Plastid</keyword>
<keyword id="KW-0793">Thylakoid</keyword>
<keyword id="KW-0813">Transport</keyword>
<reference key="1">
    <citation type="journal article" date="1992" name="Mol. Gen. Genet.">
        <title>Organization and sequence of photosynthetic genes from the plastid genome of the holoparasitic flowering plant Cuscuta reflexa.</title>
        <authorList>
            <person name="Haberhausen G."/>
            <person name="Valentin K.-U."/>
            <person name="Zetsche K."/>
        </authorList>
    </citation>
    <scope>NUCLEOTIDE SEQUENCE [GENOMIC DNA]</scope>
    <source>
        <strain>ROXB</strain>
    </source>
</reference>
<reference key="2">
    <citation type="journal article" date="2007" name="BMC Plant Biol.">
        <title>Complete DNA sequences of the plastid genomes of two parasitic flowering plant species, Cuscuta reflexa and Cuscuta gronovii.</title>
        <authorList>
            <person name="Funk H.T."/>
            <person name="Berg S."/>
            <person name="Krupinska K."/>
            <person name="Maier U.-G."/>
            <person name="Krause K."/>
        </authorList>
    </citation>
    <scope>NUCLEOTIDE SEQUENCE [LARGE SCALE GENOMIC DNA]</scope>
</reference>
<comment type="function">
    <text evidence="1">Produces ATP from ADP in the presence of a proton gradient across the membrane.</text>
</comment>
<comment type="subunit">
    <text evidence="1">F-type ATPases have 2 components, CF(1) - the catalytic core - and CF(0) - the membrane proton channel. CF(1) has five subunits: alpha(3), beta(3), gamma(1), delta(1), epsilon(1). CF(0) has three main subunits: a, b and c.</text>
</comment>
<comment type="subcellular location">
    <subcellularLocation>
        <location evidence="2">Plastid thylakoid membrane</location>
        <topology evidence="1">Peripheral membrane protein</topology>
    </subcellularLocation>
</comment>
<comment type="similarity">
    <text evidence="1">Belongs to the ATPase epsilon chain family.</text>
</comment>
<comment type="caution">
    <text evidence="2">Young tissue from this organism is photosynthetic and contains some thylakoids, although the photosynthetic activity does not exceed the light compensation point.</text>
</comment>
<name>ATPE_CUSRE</name>
<feature type="chain" id="PRO_0000188260" description="ATP synthase epsilon chain, plastid">
    <location>
        <begin position="1"/>
        <end position="136"/>
    </location>
</feature>
<sequence length="136" mass="14982">MTLKLCVLTPNRIFWDSEVEEIILSTNSGQIGILPTHTPIATSVDIGILRIRLNGRWLTMALMGGFARIGNNEITVLVNDAERSSDIDPQEAQQTVEIAEANFRKAKGKRQKIEANIALCRARTRVKAVSPISVGK</sequence>
<geneLocation type="plastid"/>
<dbReference type="EMBL" id="X61698">
    <property type="protein sequence ID" value="CAA43865.1"/>
    <property type="molecule type" value="Genomic_DNA"/>
</dbReference>
<dbReference type="EMBL" id="AM711640">
    <property type="protein sequence ID" value="CAM98408.1"/>
    <property type="molecule type" value="Genomic_DNA"/>
</dbReference>
<dbReference type="PIR" id="S20475">
    <property type="entry name" value="S20475"/>
</dbReference>
<dbReference type="RefSeq" id="YP_001430122.1">
    <property type="nucleotide sequence ID" value="NC_009766.1"/>
</dbReference>
<dbReference type="SMR" id="P30400"/>
<dbReference type="GeneID" id="5536692"/>
<dbReference type="GO" id="GO:0055035">
    <property type="term" value="C:plastid thylakoid membrane"/>
    <property type="evidence" value="ECO:0007669"/>
    <property type="project" value="UniProtKB-SubCell"/>
</dbReference>
<dbReference type="GO" id="GO:0045259">
    <property type="term" value="C:proton-transporting ATP synthase complex"/>
    <property type="evidence" value="ECO:0007669"/>
    <property type="project" value="UniProtKB-KW"/>
</dbReference>
<dbReference type="GO" id="GO:0046933">
    <property type="term" value="F:proton-transporting ATP synthase activity, rotational mechanism"/>
    <property type="evidence" value="ECO:0007669"/>
    <property type="project" value="InterPro"/>
</dbReference>
<dbReference type="CDD" id="cd12152">
    <property type="entry name" value="F1-ATPase_delta"/>
    <property type="match status" value="1"/>
</dbReference>
<dbReference type="FunFam" id="2.60.15.10:FF:000002">
    <property type="entry name" value="ATP synthase epsilon chain, chloroplastic"/>
    <property type="match status" value="1"/>
</dbReference>
<dbReference type="Gene3D" id="6.10.140.480">
    <property type="match status" value="1"/>
</dbReference>
<dbReference type="Gene3D" id="2.60.15.10">
    <property type="entry name" value="F0F1 ATP synthase delta/epsilon subunit, N-terminal"/>
    <property type="match status" value="1"/>
</dbReference>
<dbReference type="HAMAP" id="MF_00530">
    <property type="entry name" value="ATP_synth_epsil_bac"/>
    <property type="match status" value="1"/>
</dbReference>
<dbReference type="InterPro" id="IPR001469">
    <property type="entry name" value="ATP_synth_F1_dsu/esu"/>
</dbReference>
<dbReference type="InterPro" id="IPR020546">
    <property type="entry name" value="ATP_synth_F1_dsu/esu_N"/>
</dbReference>
<dbReference type="InterPro" id="IPR020547">
    <property type="entry name" value="ATP_synth_F1_esu_C"/>
</dbReference>
<dbReference type="InterPro" id="IPR036771">
    <property type="entry name" value="ATPsynth_dsu/esu_N"/>
</dbReference>
<dbReference type="NCBIfam" id="TIGR01216">
    <property type="entry name" value="ATP_synt_epsi"/>
    <property type="match status" value="1"/>
</dbReference>
<dbReference type="PANTHER" id="PTHR13822">
    <property type="entry name" value="ATP SYNTHASE DELTA/EPSILON CHAIN"/>
    <property type="match status" value="1"/>
</dbReference>
<dbReference type="PANTHER" id="PTHR13822:SF10">
    <property type="entry name" value="ATP SYNTHASE EPSILON CHAIN, CHLOROPLASTIC"/>
    <property type="match status" value="1"/>
</dbReference>
<dbReference type="Pfam" id="PF00401">
    <property type="entry name" value="ATP-synt_DE"/>
    <property type="match status" value="1"/>
</dbReference>
<dbReference type="Pfam" id="PF02823">
    <property type="entry name" value="ATP-synt_DE_N"/>
    <property type="match status" value="1"/>
</dbReference>
<dbReference type="SUPFAM" id="SSF51344">
    <property type="entry name" value="Epsilon subunit of F1F0-ATP synthase N-terminal domain"/>
    <property type="match status" value="1"/>
</dbReference>